<keyword id="KW-0963">Cytoplasm</keyword>
<keyword id="KW-0274">FAD</keyword>
<keyword id="KW-0285">Flavoprotein</keyword>
<keyword id="KW-0520">NAD</keyword>
<keyword id="KW-1185">Reference proteome</keyword>
<keyword id="KW-0819">tRNA processing</keyword>
<sequence length="629" mass="69563">MFYPDPFDVIIIGGGHAGTEAAMAAARMGQQTLLLTHNIDTLGQMSCNPAIGGIGKGHLVKEVDALGGLMAKAIDQAGIQFRILNASKGPAVRATRAQADRVRYRQAVRTALENQPNLMIFQQAVEDLIVENDRVVGAVTQMGLKFRAKAVVLTVGTFLDGKIHIGLDNYSGGRAGDPPSIPLSRRLRELPLRVGRLKTGTPPRIDARTIDFSVLAQQHGDNPMPVFSFMGNASLHPQQVPCYITHTNEKTHDVIRSNLDRSPMYAGVIEGVGPRYCPSIEDKVMRFADRNQHQIFLEPEGLTSNEIYPNGISTSLPFDVQMQIVRSMQGMENAKIVRPGYAIEYDFFDPRDLKPTLESKFIQGLFFAGQINGTTGYEEAAAQGLLAGLNAARLSADKEGWAPARSQAYLGVLVDDLCTLGTKEPYRMFTSRAEYRLMLREDNADLRLTEIGRELGLVDDERWARFNEKLENIERERQRLKSTWVTPSAEAAAEVNAHLTAPLSREASGEDLLRRPEMTYEKLTTLTPFAPALTDEQAAEQVEIQVKYEGYIARQQDEIEKQLRNENTLLPATLDYRQISGLSNEVIAKLNDHKPASIGQASRISGVTPAAISILLVWLKKQGMLRRSA</sequence>
<feature type="chain" id="PRO_0000117173" description="tRNA uridine 5-carboxymethylaminomethyl modification enzyme MnmG">
    <location>
        <begin position="1"/>
        <end position="629"/>
    </location>
</feature>
<feature type="binding site" evidence="1">
    <location>
        <begin position="13"/>
        <end position="18"/>
    </location>
    <ligand>
        <name>FAD</name>
        <dbReference type="ChEBI" id="CHEBI:57692"/>
    </ligand>
</feature>
<feature type="binding site" evidence="1">
    <location>
        <position position="125"/>
    </location>
    <ligand>
        <name>FAD</name>
        <dbReference type="ChEBI" id="CHEBI:57692"/>
    </ligand>
</feature>
<feature type="binding site" evidence="1">
    <location>
        <position position="180"/>
    </location>
    <ligand>
        <name>FAD</name>
        <dbReference type="ChEBI" id="CHEBI:57692"/>
    </ligand>
</feature>
<feature type="binding site" evidence="1">
    <location>
        <begin position="273"/>
        <end position="287"/>
    </location>
    <ligand>
        <name>NAD(+)</name>
        <dbReference type="ChEBI" id="CHEBI:57540"/>
    </ligand>
</feature>
<feature type="binding site" evidence="1">
    <location>
        <position position="370"/>
    </location>
    <ligand>
        <name>FAD</name>
        <dbReference type="ChEBI" id="CHEBI:57692"/>
    </ligand>
</feature>
<dbReference type="EMBL" id="AE005674">
    <property type="protein sequence ID" value="AAN45261.1"/>
    <property type="molecule type" value="Genomic_DNA"/>
</dbReference>
<dbReference type="EMBL" id="AE014073">
    <property type="protein sequence ID" value="AAP18936.1"/>
    <property type="molecule type" value="Genomic_DNA"/>
</dbReference>
<dbReference type="RefSeq" id="NP_709554.1">
    <property type="nucleotide sequence ID" value="NC_004337.2"/>
</dbReference>
<dbReference type="RefSeq" id="WP_000499813.1">
    <property type="nucleotide sequence ID" value="NZ_WPGW01000050.1"/>
</dbReference>
<dbReference type="SMR" id="Q83PJ6"/>
<dbReference type="STRING" id="198214.SF3821"/>
<dbReference type="PaxDb" id="198214-SF3821"/>
<dbReference type="GeneID" id="1026091"/>
<dbReference type="KEGG" id="sfl:SF3821"/>
<dbReference type="KEGG" id="sfx:S3947"/>
<dbReference type="PATRIC" id="fig|198214.7.peg.4509"/>
<dbReference type="HOGENOM" id="CLU_007831_2_2_6"/>
<dbReference type="Proteomes" id="UP000001006">
    <property type="component" value="Chromosome"/>
</dbReference>
<dbReference type="Proteomes" id="UP000002673">
    <property type="component" value="Chromosome"/>
</dbReference>
<dbReference type="GO" id="GO:0005829">
    <property type="term" value="C:cytosol"/>
    <property type="evidence" value="ECO:0007669"/>
    <property type="project" value="TreeGrafter"/>
</dbReference>
<dbReference type="GO" id="GO:0050660">
    <property type="term" value="F:flavin adenine dinucleotide binding"/>
    <property type="evidence" value="ECO:0007669"/>
    <property type="project" value="UniProtKB-UniRule"/>
</dbReference>
<dbReference type="GO" id="GO:0030488">
    <property type="term" value="P:tRNA methylation"/>
    <property type="evidence" value="ECO:0007669"/>
    <property type="project" value="TreeGrafter"/>
</dbReference>
<dbReference type="GO" id="GO:0002098">
    <property type="term" value="P:tRNA wobble uridine modification"/>
    <property type="evidence" value="ECO:0007669"/>
    <property type="project" value="InterPro"/>
</dbReference>
<dbReference type="FunFam" id="1.10.10.1800:FF:000001">
    <property type="entry name" value="tRNA uridine 5-carboxymethylaminomethyl modification enzyme MnmG"/>
    <property type="match status" value="1"/>
</dbReference>
<dbReference type="FunFam" id="1.10.150.570:FF:000001">
    <property type="entry name" value="tRNA uridine 5-carboxymethylaminomethyl modification enzyme MnmG"/>
    <property type="match status" value="1"/>
</dbReference>
<dbReference type="FunFam" id="3.50.50.60:FF:000002">
    <property type="entry name" value="tRNA uridine 5-carboxymethylaminomethyl modification enzyme MnmG"/>
    <property type="match status" value="1"/>
</dbReference>
<dbReference type="FunFam" id="3.50.50.60:FF:000010">
    <property type="entry name" value="tRNA uridine 5-carboxymethylaminomethyl modification enzyme MnmG"/>
    <property type="match status" value="1"/>
</dbReference>
<dbReference type="Gene3D" id="3.50.50.60">
    <property type="entry name" value="FAD/NAD(P)-binding domain"/>
    <property type="match status" value="2"/>
</dbReference>
<dbReference type="Gene3D" id="1.10.150.570">
    <property type="entry name" value="GidA associated domain, C-terminal subdomain"/>
    <property type="match status" value="1"/>
</dbReference>
<dbReference type="Gene3D" id="1.10.10.1800">
    <property type="entry name" value="tRNA uridine 5-carboxymethylaminomethyl modification enzyme MnmG/GidA"/>
    <property type="match status" value="1"/>
</dbReference>
<dbReference type="HAMAP" id="MF_00129">
    <property type="entry name" value="MnmG_GidA"/>
    <property type="match status" value="1"/>
</dbReference>
<dbReference type="InterPro" id="IPR036188">
    <property type="entry name" value="FAD/NAD-bd_sf"/>
</dbReference>
<dbReference type="InterPro" id="IPR049312">
    <property type="entry name" value="GIDA_C_N"/>
</dbReference>
<dbReference type="InterPro" id="IPR004416">
    <property type="entry name" value="MnmG"/>
</dbReference>
<dbReference type="InterPro" id="IPR002218">
    <property type="entry name" value="MnmG-rel"/>
</dbReference>
<dbReference type="InterPro" id="IPR020595">
    <property type="entry name" value="MnmG-rel_CS"/>
</dbReference>
<dbReference type="InterPro" id="IPR026904">
    <property type="entry name" value="MnmG_C"/>
</dbReference>
<dbReference type="InterPro" id="IPR047001">
    <property type="entry name" value="MnmG_C_subdom"/>
</dbReference>
<dbReference type="InterPro" id="IPR044920">
    <property type="entry name" value="MnmG_C_subdom_sf"/>
</dbReference>
<dbReference type="InterPro" id="IPR040131">
    <property type="entry name" value="MnmG_N"/>
</dbReference>
<dbReference type="NCBIfam" id="TIGR00136">
    <property type="entry name" value="mnmG_gidA"/>
    <property type="match status" value="1"/>
</dbReference>
<dbReference type="PANTHER" id="PTHR11806">
    <property type="entry name" value="GLUCOSE INHIBITED DIVISION PROTEIN A"/>
    <property type="match status" value="1"/>
</dbReference>
<dbReference type="PANTHER" id="PTHR11806:SF0">
    <property type="entry name" value="PROTEIN MTO1 HOMOLOG, MITOCHONDRIAL"/>
    <property type="match status" value="1"/>
</dbReference>
<dbReference type="Pfam" id="PF01134">
    <property type="entry name" value="GIDA"/>
    <property type="match status" value="1"/>
</dbReference>
<dbReference type="Pfam" id="PF21680">
    <property type="entry name" value="GIDA_C_1st"/>
    <property type="match status" value="1"/>
</dbReference>
<dbReference type="Pfam" id="PF13932">
    <property type="entry name" value="SAM_GIDA_C"/>
    <property type="match status" value="1"/>
</dbReference>
<dbReference type="SMART" id="SM01228">
    <property type="entry name" value="GIDA_assoc_3"/>
    <property type="match status" value="1"/>
</dbReference>
<dbReference type="SUPFAM" id="SSF51905">
    <property type="entry name" value="FAD/NAD(P)-binding domain"/>
    <property type="match status" value="1"/>
</dbReference>
<dbReference type="PROSITE" id="PS01280">
    <property type="entry name" value="GIDA_1"/>
    <property type="match status" value="1"/>
</dbReference>
<dbReference type="PROSITE" id="PS01281">
    <property type="entry name" value="GIDA_2"/>
    <property type="match status" value="1"/>
</dbReference>
<proteinExistence type="inferred from homology"/>
<comment type="function">
    <text evidence="1">NAD-binding protein involved in the addition of a carboxymethylaminomethyl (cmnm) group at the wobble position (U34) of certain tRNAs, forming tRNA-cmnm(5)s(2)U34.</text>
</comment>
<comment type="cofactor">
    <cofactor evidence="1">
        <name>FAD</name>
        <dbReference type="ChEBI" id="CHEBI:57692"/>
    </cofactor>
</comment>
<comment type="subunit">
    <text evidence="1">Homodimer. Heterotetramer of two MnmE and two MnmG subunits.</text>
</comment>
<comment type="subcellular location">
    <subcellularLocation>
        <location evidence="1">Cytoplasm</location>
    </subcellularLocation>
</comment>
<comment type="similarity">
    <text evidence="1">Belongs to the MnmG family.</text>
</comment>
<gene>
    <name evidence="1" type="primary">mnmG</name>
    <name evidence="1" type="synonym">gidA</name>
    <name type="ordered locus">SF3821</name>
    <name type="ordered locus">S3947</name>
</gene>
<evidence type="ECO:0000255" key="1">
    <source>
        <dbReference type="HAMAP-Rule" id="MF_00129"/>
    </source>
</evidence>
<name>MNMG_SHIFL</name>
<accession>Q83PJ6</accession>
<accession>Q7BZA3</accession>
<organism>
    <name type="scientific">Shigella flexneri</name>
    <dbReference type="NCBI Taxonomy" id="623"/>
    <lineage>
        <taxon>Bacteria</taxon>
        <taxon>Pseudomonadati</taxon>
        <taxon>Pseudomonadota</taxon>
        <taxon>Gammaproteobacteria</taxon>
        <taxon>Enterobacterales</taxon>
        <taxon>Enterobacteriaceae</taxon>
        <taxon>Shigella</taxon>
    </lineage>
</organism>
<reference key="1">
    <citation type="journal article" date="2002" name="Nucleic Acids Res.">
        <title>Genome sequence of Shigella flexneri 2a: insights into pathogenicity through comparison with genomes of Escherichia coli K12 and O157.</title>
        <authorList>
            <person name="Jin Q."/>
            <person name="Yuan Z."/>
            <person name="Xu J."/>
            <person name="Wang Y."/>
            <person name="Shen Y."/>
            <person name="Lu W."/>
            <person name="Wang J."/>
            <person name="Liu H."/>
            <person name="Yang J."/>
            <person name="Yang F."/>
            <person name="Zhang X."/>
            <person name="Zhang J."/>
            <person name="Yang G."/>
            <person name="Wu H."/>
            <person name="Qu D."/>
            <person name="Dong J."/>
            <person name="Sun L."/>
            <person name="Xue Y."/>
            <person name="Zhao A."/>
            <person name="Gao Y."/>
            <person name="Zhu J."/>
            <person name="Kan B."/>
            <person name="Ding K."/>
            <person name="Chen S."/>
            <person name="Cheng H."/>
            <person name="Yao Z."/>
            <person name="He B."/>
            <person name="Chen R."/>
            <person name="Ma D."/>
            <person name="Qiang B."/>
            <person name="Wen Y."/>
            <person name="Hou Y."/>
            <person name="Yu J."/>
        </authorList>
    </citation>
    <scope>NUCLEOTIDE SEQUENCE [LARGE SCALE GENOMIC DNA]</scope>
    <source>
        <strain>301 / Serotype 2a</strain>
    </source>
</reference>
<reference key="2">
    <citation type="journal article" date="2003" name="Infect. Immun.">
        <title>Complete genome sequence and comparative genomics of Shigella flexneri serotype 2a strain 2457T.</title>
        <authorList>
            <person name="Wei J."/>
            <person name="Goldberg M.B."/>
            <person name="Burland V."/>
            <person name="Venkatesan M.M."/>
            <person name="Deng W."/>
            <person name="Fournier G."/>
            <person name="Mayhew G.F."/>
            <person name="Plunkett G. III"/>
            <person name="Rose D.J."/>
            <person name="Darling A."/>
            <person name="Mau B."/>
            <person name="Perna N.T."/>
            <person name="Payne S.M."/>
            <person name="Runyen-Janecky L.J."/>
            <person name="Zhou S."/>
            <person name="Schwartz D.C."/>
            <person name="Blattner F.R."/>
        </authorList>
    </citation>
    <scope>NUCLEOTIDE SEQUENCE [LARGE SCALE GENOMIC DNA]</scope>
    <source>
        <strain>ATCC 700930 / 2457T / Serotype 2a</strain>
    </source>
</reference>
<protein>
    <recommendedName>
        <fullName evidence="1">tRNA uridine 5-carboxymethylaminomethyl modification enzyme MnmG</fullName>
    </recommendedName>
    <alternativeName>
        <fullName evidence="1">Glucose-inhibited division protein A</fullName>
    </alternativeName>
</protein>